<proteinExistence type="inferred from homology"/>
<name>CYSH_BACC3</name>
<gene>
    <name evidence="1" type="primary">cysH</name>
    <name type="ordered locus">BCA_1478</name>
</gene>
<dbReference type="EC" id="1.8.4.10" evidence="1"/>
<dbReference type="EMBL" id="CP001407">
    <property type="protein sequence ID" value="ACO30436.1"/>
    <property type="molecule type" value="Genomic_DNA"/>
</dbReference>
<dbReference type="RefSeq" id="WP_000958987.1">
    <property type="nucleotide sequence ID" value="NZ_CP009318.1"/>
</dbReference>
<dbReference type="SMR" id="C1EMR8"/>
<dbReference type="KEGG" id="bcx:BCA_1478"/>
<dbReference type="PATRIC" id="fig|572264.18.peg.1426"/>
<dbReference type="Proteomes" id="UP000002210">
    <property type="component" value="Chromosome"/>
</dbReference>
<dbReference type="GO" id="GO:0005737">
    <property type="term" value="C:cytoplasm"/>
    <property type="evidence" value="ECO:0007669"/>
    <property type="project" value="UniProtKB-SubCell"/>
</dbReference>
<dbReference type="GO" id="GO:0051539">
    <property type="term" value="F:4 iron, 4 sulfur cluster binding"/>
    <property type="evidence" value="ECO:0007669"/>
    <property type="project" value="UniProtKB-UniRule"/>
</dbReference>
<dbReference type="GO" id="GO:0043866">
    <property type="term" value="F:adenylyl-sulfate reductase (thioredoxin) activity"/>
    <property type="evidence" value="ECO:0007669"/>
    <property type="project" value="UniProtKB-EC"/>
</dbReference>
<dbReference type="GO" id="GO:0046872">
    <property type="term" value="F:metal ion binding"/>
    <property type="evidence" value="ECO:0007669"/>
    <property type="project" value="UniProtKB-KW"/>
</dbReference>
<dbReference type="GO" id="GO:0004604">
    <property type="term" value="F:phosphoadenylyl-sulfate reductase (thioredoxin) activity"/>
    <property type="evidence" value="ECO:0007669"/>
    <property type="project" value="UniProtKB-UniRule"/>
</dbReference>
<dbReference type="GO" id="GO:0019344">
    <property type="term" value="P:cysteine biosynthetic process"/>
    <property type="evidence" value="ECO:0007669"/>
    <property type="project" value="InterPro"/>
</dbReference>
<dbReference type="GO" id="GO:0070814">
    <property type="term" value="P:hydrogen sulfide biosynthetic process"/>
    <property type="evidence" value="ECO:0007669"/>
    <property type="project" value="UniProtKB-UniRule"/>
</dbReference>
<dbReference type="GO" id="GO:0019379">
    <property type="term" value="P:sulfate assimilation, phosphoadenylyl sulfate reduction by phosphoadenylyl-sulfate reductase (thioredoxin)"/>
    <property type="evidence" value="ECO:0007669"/>
    <property type="project" value="UniProtKB-UniRule"/>
</dbReference>
<dbReference type="CDD" id="cd23945">
    <property type="entry name" value="PAPS_reductase"/>
    <property type="match status" value="1"/>
</dbReference>
<dbReference type="FunFam" id="3.40.50.620:FF:000095">
    <property type="entry name" value="Phosphoadenosine phosphosulfate reductase"/>
    <property type="match status" value="1"/>
</dbReference>
<dbReference type="Gene3D" id="3.40.50.620">
    <property type="entry name" value="HUPs"/>
    <property type="match status" value="1"/>
</dbReference>
<dbReference type="HAMAP" id="MF_00063">
    <property type="entry name" value="CysH"/>
    <property type="match status" value="1"/>
</dbReference>
<dbReference type="InterPro" id="IPR011798">
    <property type="entry name" value="APS_reductase"/>
</dbReference>
<dbReference type="InterPro" id="IPR004511">
    <property type="entry name" value="PAPS/APS_Rdtase"/>
</dbReference>
<dbReference type="InterPro" id="IPR002500">
    <property type="entry name" value="PAPS_reduct_dom"/>
</dbReference>
<dbReference type="InterPro" id="IPR014729">
    <property type="entry name" value="Rossmann-like_a/b/a_fold"/>
</dbReference>
<dbReference type="NCBIfam" id="TIGR02055">
    <property type="entry name" value="APS_reductase"/>
    <property type="match status" value="1"/>
</dbReference>
<dbReference type="NCBIfam" id="TIGR00434">
    <property type="entry name" value="cysH"/>
    <property type="match status" value="1"/>
</dbReference>
<dbReference type="NCBIfam" id="NF002537">
    <property type="entry name" value="PRK02090.1"/>
    <property type="match status" value="1"/>
</dbReference>
<dbReference type="PANTHER" id="PTHR46509">
    <property type="entry name" value="PHOSPHOADENOSINE PHOSPHOSULFATE REDUCTASE"/>
    <property type="match status" value="1"/>
</dbReference>
<dbReference type="PANTHER" id="PTHR46509:SF1">
    <property type="entry name" value="PHOSPHOADENOSINE PHOSPHOSULFATE REDUCTASE"/>
    <property type="match status" value="1"/>
</dbReference>
<dbReference type="Pfam" id="PF01507">
    <property type="entry name" value="PAPS_reduct"/>
    <property type="match status" value="1"/>
</dbReference>
<dbReference type="PIRSF" id="PIRSF000857">
    <property type="entry name" value="PAPS_reductase"/>
    <property type="match status" value="1"/>
</dbReference>
<dbReference type="SUPFAM" id="SSF52402">
    <property type="entry name" value="Adenine nucleotide alpha hydrolases-like"/>
    <property type="match status" value="1"/>
</dbReference>
<protein>
    <recommendedName>
        <fullName evidence="1">Adenosine 5'-phosphosulfate reductase</fullName>
        <shortName evidence="1">APS reductase</shortName>
        <ecNumber evidence="1">1.8.4.10</ecNumber>
    </recommendedName>
    <alternativeName>
        <fullName evidence="1">5'-adenylylsulfate reductase</fullName>
    </alternativeName>
    <alternativeName>
        <fullName evidence="1">Thioredoxin-dependent 5'-adenylylsulfate reductase</fullName>
    </alternativeName>
</protein>
<feature type="chain" id="PRO_1000117923" description="Adenosine 5'-phosphosulfate reductase">
    <location>
        <begin position="1"/>
        <end position="234"/>
    </location>
</feature>
<feature type="active site" description="Nucleophile; cysteine thiosulfonate intermediate" evidence="1">
    <location>
        <position position="229"/>
    </location>
</feature>
<feature type="binding site" evidence="1">
    <location>
        <position position="120"/>
    </location>
    <ligand>
        <name>[4Fe-4S] cluster</name>
        <dbReference type="ChEBI" id="CHEBI:49883"/>
    </ligand>
</feature>
<feature type="binding site" evidence="1">
    <location>
        <position position="121"/>
    </location>
    <ligand>
        <name>[4Fe-4S] cluster</name>
        <dbReference type="ChEBI" id="CHEBI:49883"/>
    </ligand>
</feature>
<feature type="binding site" evidence="1">
    <location>
        <position position="203"/>
    </location>
    <ligand>
        <name>[4Fe-4S] cluster</name>
        <dbReference type="ChEBI" id="CHEBI:49883"/>
    </ligand>
</feature>
<feature type="binding site" evidence="1">
    <location>
        <position position="206"/>
    </location>
    <ligand>
        <name>[4Fe-4S] cluster</name>
        <dbReference type="ChEBI" id="CHEBI:49883"/>
    </ligand>
</feature>
<keyword id="KW-0963">Cytoplasm</keyword>
<keyword id="KW-0408">Iron</keyword>
<keyword id="KW-0411">Iron-sulfur</keyword>
<keyword id="KW-0479">Metal-binding</keyword>
<keyword id="KW-0560">Oxidoreductase</keyword>
<organism>
    <name type="scientific">Bacillus cereus (strain 03BB102)</name>
    <dbReference type="NCBI Taxonomy" id="572264"/>
    <lineage>
        <taxon>Bacteria</taxon>
        <taxon>Bacillati</taxon>
        <taxon>Bacillota</taxon>
        <taxon>Bacilli</taxon>
        <taxon>Bacillales</taxon>
        <taxon>Bacillaceae</taxon>
        <taxon>Bacillus</taxon>
        <taxon>Bacillus cereus group</taxon>
    </lineage>
</organism>
<evidence type="ECO:0000255" key="1">
    <source>
        <dbReference type="HAMAP-Rule" id="MF_00063"/>
    </source>
</evidence>
<accession>C1EMR8</accession>
<comment type="function">
    <text evidence="1">Catalyzes the formation of sulfite from adenosine 5'-phosphosulfate (APS) using thioredoxin as an electron donor.</text>
</comment>
<comment type="catalytic activity">
    <reaction evidence="1">
        <text>[thioredoxin]-disulfide + sulfite + AMP + 2 H(+) = adenosine 5'-phosphosulfate + [thioredoxin]-dithiol</text>
        <dbReference type="Rhea" id="RHEA:21976"/>
        <dbReference type="Rhea" id="RHEA-COMP:10698"/>
        <dbReference type="Rhea" id="RHEA-COMP:10700"/>
        <dbReference type="ChEBI" id="CHEBI:15378"/>
        <dbReference type="ChEBI" id="CHEBI:17359"/>
        <dbReference type="ChEBI" id="CHEBI:29950"/>
        <dbReference type="ChEBI" id="CHEBI:50058"/>
        <dbReference type="ChEBI" id="CHEBI:58243"/>
        <dbReference type="ChEBI" id="CHEBI:456215"/>
        <dbReference type="EC" id="1.8.4.10"/>
    </reaction>
</comment>
<comment type="cofactor">
    <cofactor evidence="1">
        <name>[4Fe-4S] cluster</name>
        <dbReference type="ChEBI" id="CHEBI:49883"/>
    </cofactor>
    <text evidence="1">Binds 1 [4Fe-4S] cluster per subunit.</text>
</comment>
<comment type="pathway">
    <text evidence="1">Sulfur metabolism; hydrogen sulfide biosynthesis; sulfite from sulfate.</text>
</comment>
<comment type="subcellular location">
    <subcellularLocation>
        <location evidence="1">Cytoplasm</location>
    </subcellularLocation>
</comment>
<comment type="similarity">
    <text evidence="1">Belongs to the PAPS reductase family. CysH subfamily.</text>
</comment>
<reference key="1">
    <citation type="submission" date="2009-02" db="EMBL/GenBank/DDBJ databases">
        <title>Genome sequence of Bacillus cereus 03BB102.</title>
        <authorList>
            <person name="Dodson R.J."/>
            <person name="Jackson P."/>
            <person name="Munk A.C."/>
            <person name="Brettin T."/>
            <person name="Bruce D."/>
            <person name="Detter C."/>
            <person name="Tapia R."/>
            <person name="Han C."/>
            <person name="Sutton G."/>
            <person name="Sims D."/>
        </authorList>
    </citation>
    <scope>NUCLEOTIDE SEQUENCE [LARGE SCALE GENOMIC DNA]</scope>
    <source>
        <strain>03BB102</strain>
    </source>
</reference>
<sequence length="234" mass="27303">MLTYETWEENDVSFSEEDETKGALSVLSWAYKEYENEIVYACSFGVEGMVLLHLINQVNPSAKVVFLDTNVHFQETYELIQKVRERFPSLNIIEKQPKLTLNEQAKLHGDKLWESNPNLCCKIRKILPLEESLANEKAWISGLRREQSETRKHTKFINQDHRFQSIKVCPLIHWTWKEVWRYVYKHSLPYNPLHDVGYPSIGCEKCTLPVGEGGDSRDGRWAGKVKTECGLHYQ</sequence>